<comment type="function">
    <text evidence="1">Component of the dark-operative protochlorophyllide reductase (DPOR) that uses Mg-ATP and reduced ferredoxin to reduce ring D of protochlorophyllide (Pchlide) to form chlorophyllide a (Chlide). This reaction is light-independent. The L component serves as a unique electron donor to the NB-component of the complex, and binds Mg-ATP.</text>
</comment>
<comment type="catalytic activity">
    <reaction evidence="1">
        <text>chlorophyllide a + oxidized 2[4Fe-4S]-[ferredoxin] + 2 ADP + 2 phosphate = protochlorophyllide a + reduced 2[4Fe-4S]-[ferredoxin] + 2 ATP + 2 H2O</text>
        <dbReference type="Rhea" id="RHEA:28202"/>
        <dbReference type="Rhea" id="RHEA-COMP:10002"/>
        <dbReference type="Rhea" id="RHEA-COMP:10004"/>
        <dbReference type="ChEBI" id="CHEBI:15377"/>
        <dbReference type="ChEBI" id="CHEBI:30616"/>
        <dbReference type="ChEBI" id="CHEBI:33722"/>
        <dbReference type="ChEBI" id="CHEBI:33723"/>
        <dbReference type="ChEBI" id="CHEBI:43474"/>
        <dbReference type="ChEBI" id="CHEBI:83348"/>
        <dbReference type="ChEBI" id="CHEBI:83350"/>
        <dbReference type="ChEBI" id="CHEBI:456216"/>
        <dbReference type="EC" id="1.3.7.7"/>
    </reaction>
</comment>
<comment type="cofactor">
    <cofactor evidence="1">
        <name>[4Fe-4S] cluster</name>
        <dbReference type="ChEBI" id="CHEBI:49883"/>
    </cofactor>
    <text evidence="1">Binds 1 [4Fe-4S] cluster per dimer.</text>
</comment>
<comment type="pathway">
    <text evidence="1">Porphyrin-containing compound metabolism; chlorophyll biosynthesis (light-independent).</text>
</comment>
<comment type="subunit">
    <text evidence="1">Homodimer. Protochlorophyllide reductase is composed of three subunits; ChlL, ChlN and ChlB.</text>
</comment>
<comment type="subcellular location">
    <subcellularLocation>
        <location>Plastid</location>
        <location>Chloroplast</location>
    </subcellularLocation>
</comment>
<comment type="similarity">
    <text evidence="1">Belongs to the NifH/BchL/ChlL family.</text>
</comment>
<name>CHLL_MARPO</name>
<dbReference type="EC" id="1.3.7.7" evidence="1"/>
<dbReference type="EMBL" id="X04465">
    <property type="protein sequence ID" value="CAA28144.1"/>
    <property type="molecule type" value="Genomic_DNA"/>
</dbReference>
<dbReference type="PIR" id="A00541">
    <property type="entry name" value="NILVC"/>
</dbReference>
<dbReference type="RefSeq" id="NP_039358.1">
    <property type="nucleotide sequence ID" value="NC_001319.1"/>
</dbReference>
<dbReference type="SMR" id="P06267"/>
<dbReference type="GeneID" id="2702582"/>
<dbReference type="UniPathway" id="UPA00670"/>
<dbReference type="GO" id="GO:0009507">
    <property type="term" value="C:chloroplast"/>
    <property type="evidence" value="ECO:0007669"/>
    <property type="project" value="UniProtKB-SubCell"/>
</dbReference>
<dbReference type="GO" id="GO:0051539">
    <property type="term" value="F:4 iron, 4 sulfur cluster binding"/>
    <property type="evidence" value="ECO:0007669"/>
    <property type="project" value="UniProtKB-UniRule"/>
</dbReference>
<dbReference type="GO" id="GO:0005524">
    <property type="term" value="F:ATP binding"/>
    <property type="evidence" value="ECO:0007669"/>
    <property type="project" value="UniProtKB-UniRule"/>
</dbReference>
<dbReference type="GO" id="GO:0046872">
    <property type="term" value="F:metal ion binding"/>
    <property type="evidence" value="ECO:0007669"/>
    <property type="project" value="UniProtKB-KW"/>
</dbReference>
<dbReference type="GO" id="GO:0016730">
    <property type="term" value="F:oxidoreductase activity, acting on iron-sulfur proteins as donors"/>
    <property type="evidence" value="ECO:0007669"/>
    <property type="project" value="InterPro"/>
</dbReference>
<dbReference type="GO" id="GO:0016636">
    <property type="term" value="F:oxidoreductase activity, acting on the CH-CH group of donors, iron-sulfur protein as acceptor"/>
    <property type="evidence" value="ECO:0007669"/>
    <property type="project" value="UniProtKB-UniRule"/>
</dbReference>
<dbReference type="GO" id="GO:0036068">
    <property type="term" value="P:light-independent chlorophyll biosynthetic process"/>
    <property type="evidence" value="ECO:0007669"/>
    <property type="project" value="UniProtKB-UniRule"/>
</dbReference>
<dbReference type="GO" id="GO:0019685">
    <property type="term" value="P:photosynthesis, dark reaction"/>
    <property type="evidence" value="ECO:0007669"/>
    <property type="project" value="InterPro"/>
</dbReference>
<dbReference type="CDD" id="cd02032">
    <property type="entry name" value="Bchl-like"/>
    <property type="match status" value="1"/>
</dbReference>
<dbReference type="Gene3D" id="3.40.50.300">
    <property type="entry name" value="P-loop containing nucleotide triphosphate hydrolases"/>
    <property type="match status" value="1"/>
</dbReference>
<dbReference type="HAMAP" id="MF_00355">
    <property type="entry name" value="ChlL_BchL"/>
    <property type="match status" value="1"/>
</dbReference>
<dbReference type="InterPro" id="IPR030655">
    <property type="entry name" value="NifH/chlL_CS"/>
</dbReference>
<dbReference type="InterPro" id="IPR000392">
    <property type="entry name" value="NifH/frxC"/>
</dbReference>
<dbReference type="InterPro" id="IPR027417">
    <property type="entry name" value="P-loop_NTPase"/>
</dbReference>
<dbReference type="InterPro" id="IPR005971">
    <property type="entry name" value="Protochlorophyllide_ATP-bd"/>
</dbReference>
<dbReference type="NCBIfam" id="TIGR01281">
    <property type="entry name" value="DPOR_bchL"/>
    <property type="match status" value="1"/>
</dbReference>
<dbReference type="PANTHER" id="PTHR42864">
    <property type="entry name" value="LIGHT-INDEPENDENT PROTOCHLOROPHYLLIDE REDUCTASE IRON-SULFUR ATP-BINDING PROTEIN"/>
    <property type="match status" value="1"/>
</dbReference>
<dbReference type="PANTHER" id="PTHR42864:SF2">
    <property type="entry name" value="LIGHT-INDEPENDENT PROTOCHLOROPHYLLIDE REDUCTASE IRON-SULFUR ATP-BINDING PROTEIN"/>
    <property type="match status" value="1"/>
</dbReference>
<dbReference type="Pfam" id="PF00142">
    <property type="entry name" value="Fer4_NifH"/>
    <property type="match status" value="1"/>
</dbReference>
<dbReference type="PIRSF" id="PIRSF000363">
    <property type="entry name" value="Nitrogenase_iron"/>
    <property type="match status" value="1"/>
</dbReference>
<dbReference type="PRINTS" id="PR00091">
    <property type="entry name" value="NITROGNASEII"/>
</dbReference>
<dbReference type="SUPFAM" id="SSF52540">
    <property type="entry name" value="P-loop containing nucleoside triphosphate hydrolases"/>
    <property type="match status" value="1"/>
</dbReference>
<dbReference type="PROSITE" id="PS00746">
    <property type="entry name" value="NIFH_FRXC_1"/>
    <property type="match status" value="1"/>
</dbReference>
<dbReference type="PROSITE" id="PS00692">
    <property type="entry name" value="NIFH_FRXC_2"/>
    <property type="match status" value="1"/>
</dbReference>
<dbReference type="PROSITE" id="PS51026">
    <property type="entry name" value="NIFH_FRXC_3"/>
    <property type="match status" value="1"/>
</dbReference>
<proteinExistence type="evidence at protein level"/>
<evidence type="ECO:0000255" key="1">
    <source>
        <dbReference type="HAMAP-Rule" id="MF_00355"/>
    </source>
</evidence>
<geneLocation type="chloroplast"/>
<accession>P06267</accession>
<keyword id="KW-0004">4Fe-4S</keyword>
<keyword id="KW-0067">ATP-binding</keyword>
<keyword id="KW-0149">Chlorophyll biosynthesis</keyword>
<keyword id="KW-0150">Chloroplast</keyword>
<keyword id="KW-0408">Iron</keyword>
<keyword id="KW-0411">Iron-sulfur</keyword>
<keyword id="KW-0460">Magnesium</keyword>
<keyword id="KW-0479">Metal-binding</keyword>
<keyword id="KW-0547">Nucleotide-binding</keyword>
<keyword id="KW-0560">Oxidoreductase</keyword>
<keyword id="KW-0602">Photosynthesis</keyword>
<keyword id="KW-0934">Plastid</keyword>
<feature type="chain" id="PRO_0000139559" description="Light-independent protochlorophyllide reductase iron-sulfur ATP-binding protein">
    <location>
        <begin position="1"/>
        <end position="289"/>
    </location>
</feature>
<feature type="binding site" evidence="1">
    <location>
        <begin position="10"/>
        <end position="15"/>
    </location>
    <ligand>
        <name>ATP</name>
        <dbReference type="ChEBI" id="CHEBI:30616"/>
    </ligand>
</feature>
<feature type="binding site" evidence="1">
    <location>
        <position position="14"/>
    </location>
    <ligand>
        <name>Mg(2+)</name>
        <dbReference type="ChEBI" id="CHEBI:18420"/>
    </ligand>
</feature>
<feature type="binding site" evidence="1">
    <location>
        <position position="39"/>
    </location>
    <ligand>
        <name>ATP</name>
        <dbReference type="ChEBI" id="CHEBI:30616"/>
    </ligand>
</feature>
<feature type="binding site" evidence="1">
    <location>
        <position position="95"/>
    </location>
    <ligand>
        <name>[4Fe-4S] cluster</name>
        <dbReference type="ChEBI" id="CHEBI:49883"/>
        <note>ligand shared between dimeric partners</note>
    </ligand>
</feature>
<feature type="binding site" evidence="1">
    <location>
        <position position="129"/>
    </location>
    <ligand>
        <name>[4Fe-4S] cluster</name>
        <dbReference type="ChEBI" id="CHEBI:49883"/>
        <note>ligand shared between dimeric partners</note>
    </ligand>
</feature>
<feature type="binding site" evidence="1">
    <location>
        <begin position="180"/>
        <end position="181"/>
    </location>
    <ligand>
        <name>ATP</name>
        <dbReference type="ChEBI" id="CHEBI:30616"/>
    </ligand>
</feature>
<protein>
    <recommendedName>
        <fullName evidence="1">Light-independent protochlorophyllide reductase iron-sulfur ATP-binding protein</fullName>
        <shortName evidence="1">DPOR subunit L</shortName>
        <shortName evidence="1">LI-POR subunit L</shortName>
        <ecNumber evidence="1">1.3.7.7</ecNumber>
    </recommendedName>
</protein>
<gene>
    <name evidence="1" type="primary">chlL</name>
    <name type="synonym">frxC</name>
</gene>
<reference key="1">
    <citation type="journal article" date="1986" name="Nature">
        <title>Chloroplast gene organization deduced from complete sequence of liverwort Marchantia polymorpha chloroplast DNA.</title>
        <authorList>
            <person name="Ohyama K."/>
            <person name="Fukuzawa H."/>
            <person name="Kohchi T."/>
            <person name="Shirai H."/>
            <person name="Sano T."/>
            <person name="Sano S."/>
            <person name="Umesono K."/>
            <person name="Shiki Y."/>
            <person name="Takeuchi M."/>
            <person name="Chang Z."/>
            <person name="Aota S."/>
            <person name="Inokuchi H."/>
            <person name="Ozeki H."/>
        </authorList>
    </citation>
    <scope>NUCLEOTIDE SEQUENCE [LARGE SCALE GENOMIC DNA]</scope>
</reference>
<reference key="2">
    <citation type="journal article" date="1988" name="J. Mol. Biol.">
        <title>Structure and organization of Marchantia polymorpha chloroplast genome. IV. Inverted repeat and small single copy regions.</title>
        <authorList>
            <person name="Kohchi T."/>
            <person name="Shirai H."/>
            <person name="Fukuzawa H."/>
            <person name="Sano T."/>
            <person name="Komano T."/>
            <person name="Umesono K."/>
            <person name="Inokuchi H."/>
            <person name="Ozeki H."/>
            <person name="Ohyama K."/>
        </authorList>
    </citation>
    <scope>NUCLEOTIDE SEQUENCE [GENOMIC DNA]</scope>
</reference>
<reference key="3">
    <citation type="journal article" date="1989" name="Plant Mol. Biol.">
        <title>Identification of a novel nifH-like (frxC) protein in chloroplasts of the liverwort Marchantia polymorpha.</title>
        <authorList>
            <person name="Fujita Y."/>
            <person name="Takahashi Y."/>
            <person name="Kohchi T."/>
            <person name="Ozeki H."/>
            <person name="Ohyama K."/>
            <person name="Matsubara H."/>
        </authorList>
    </citation>
    <scope>CHARACTERIZATION</scope>
</reference>
<organism>
    <name type="scientific">Marchantia polymorpha</name>
    <name type="common">Common liverwort</name>
    <name type="synonym">Marchantia aquatica</name>
    <dbReference type="NCBI Taxonomy" id="3197"/>
    <lineage>
        <taxon>Eukaryota</taxon>
        <taxon>Viridiplantae</taxon>
        <taxon>Streptophyta</taxon>
        <taxon>Embryophyta</taxon>
        <taxon>Marchantiophyta</taxon>
        <taxon>Marchantiopsida</taxon>
        <taxon>Marchantiidae</taxon>
        <taxon>Marchantiales</taxon>
        <taxon>Marchantiaceae</taxon>
        <taxon>Marchantia</taxon>
    </lineage>
</organism>
<sequence>MKIAVYGKGGIGKSTTSCNISIALARRGKKVLQIGCDPKHDSTFTLTGFLIPTIIDTLQSKDYHYEDVWPEDVIYKGYGRCDCVEAGGPPAGAGCGGYVVGETVKLLKELNAFYEYDIILFDVLGDVVCGGFAAPLNYADYCIIITDNGFDALFAANRIAASVREKARTHPLRLAGLVGNRTSKRDLIDKYVEACPMPVLEVLPLIEDIRVSRVKGKTLFEMVELQPSLKYVCDFYLNIADQILSKPEGIIPKEVPDRELFSLLSDFYLNPVNTVNEKNKPNLIDFMII</sequence>